<proteinExistence type="inferred from homology"/>
<evidence type="ECO:0000250" key="1"/>
<evidence type="ECO:0000255" key="2">
    <source>
        <dbReference type="HAMAP-Rule" id="MF_01302"/>
    </source>
</evidence>
<evidence type="ECO:0000305" key="3"/>
<reference key="1">
    <citation type="journal article" date="2005" name="Nat. Biotechnol.">
        <title>The complete genome sequence of the meat-borne lactic acid bacterium Lactobacillus sakei 23K.</title>
        <authorList>
            <person name="Chaillou S."/>
            <person name="Champomier-Verges M.-C."/>
            <person name="Cornet M."/>
            <person name="Crutz-Le Coq A.-M."/>
            <person name="Dudez A.-M."/>
            <person name="Martin V."/>
            <person name="Beaufils S."/>
            <person name="Darbon-Rongere E."/>
            <person name="Bossy R."/>
            <person name="Loux V."/>
            <person name="Zagorec M."/>
        </authorList>
    </citation>
    <scope>NUCLEOTIDE SEQUENCE [LARGE SCALE GENOMIC DNA]</scope>
    <source>
        <strain>23K</strain>
    </source>
</reference>
<keyword id="KW-1185">Reference proteome</keyword>
<keyword id="KW-0687">Ribonucleoprotein</keyword>
<keyword id="KW-0689">Ribosomal protein</keyword>
<keyword id="KW-0694">RNA-binding</keyword>
<keyword id="KW-0699">rRNA-binding</keyword>
<protein>
    <recommendedName>
        <fullName evidence="2">Small ribosomal subunit protein uS8</fullName>
    </recommendedName>
    <alternativeName>
        <fullName evidence="3">30S ribosomal protein S8</fullName>
    </alternativeName>
</protein>
<comment type="function">
    <text evidence="2">One of the primary rRNA binding proteins, it binds directly to 16S rRNA central domain where it helps coordinate assembly of the platform of the 30S subunit.</text>
</comment>
<comment type="subunit">
    <text evidence="2">Part of the 30S ribosomal subunit. Contacts proteins S5 and S12.</text>
</comment>
<comment type="similarity">
    <text evidence="2">Belongs to the universal ribosomal protein uS8 family.</text>
</comment>
<name>RS8_LATSS</name>
<dbReference type="EMBL" id="CR936503">
    <property type="protein sequence ID" value="CAI56059.1"/>
    <property type="molecule type" value="Genomic_DNA"/>
</dbReference>
<dbReference type="RefSeq" id="WP_011375440.1">
    <property type="nucleotide sequence ID" value="NC_007576.1"/>
</dbReference>
<dbReference type="SMR" id="Q38US5"/>
<dbReference type="STRING" id="314315.LCA_1751"/>
<dbReference type="GeneID" id="57132667"/>
<dbReference type="KEGG" id="lsa:LCA_1751"/>
<dbReference type="eggNOG" id="COG0096">
    <property type="taxonomic scope" value="Bacteria"/>
</dbReference>
<dbReference type="HOGENOM" id="CLU_098428_0_2_9"/>
<dbReference type="OrthoDB" id="9802617at2"/>
<dbReference type="Proteomes" id="UP000002707">
    <property type="component" value="Chromosome"/>
</dbReference>
<dbReference type="GO" id="GO:1990904">
    <property type="term" value="C:ribonucleoprotein complex"/>
    <property type="evidence" value="ECO:0007669"/>
    <property type="project" value="UniProtKB-KW"/>
</dbReference>
<dbReference type="GO" id="GO:0005840">
    <property type="term" value="C:ribosome"/>
    <property type="evidence" value="ECO:0007669"/>
    <property type="project" value="UniProtKB-KW"/>
</dbReference>
<dbReference type="GO" id="GO:0019843">
    <property type="term" value="F:rRNA binding"/>
    <property type="evidence" value="ECO:0007669"/>
    <property type="project" value="UniProtKB-UniRule"/>
</dbReference>
<dbReference type="GO" id="GO:0003735">
    <property type="term" value="F:structural constituent of ribosome"/>
    <property type="evidence" value="ECO:0007669"/>
    <property type="project" value="InterPro"/>
</dbReference>
<dbReference type="GO" id="GO:0006412">
    <property type="term" value="P:translation"/>
    <property type="evidence" value="ECO:0007669"/>
    <property type="project" value="UniProtKB-UniRule"/>
</dbReference>
<dbReference type="FunFam" id="3.30.1370.30:FF:000002">
    <property type="entry name" value="30S ribosomal protein S8"/>
    <property type="match status" value="1"/>
</dbReference>
<dbReference type="FunFam" id="3.30.1490.10:FF:000001">
    <property type="entry name" value="30S ribosomal protein S8"/>
    <property type="match status" value="1"/>
</dbReference>
<dbReference type="Gene3D" id="3.30.1370.30">
    <property type="match status" value="1"/>
</dbReference>
<dbReference type="Gene3D" id="3.30.1490.10">
    <property type="match status" value="1"/>
</dbReference>
<dbReference type="HAMAP" id="MF_01302_B">
    <property type="entry name" value="Ribosomal_uS8_B"/>
    <property type="match status" value="1"/>
</dbReference>
<dbReference type="InterPro" id="IPR000630">
    <property type="entry name" value="Ribosomal_uS8"/>
</dbReference>
<dbReference type="InterPro" id="IPR047863">
    <property type="entry name" value="Ribosomal_uS8_CS"/>
</dbReference>
<dbReference type="InterPro" id="IPR035987">
    <property type="entry name" value="Ribosomal_uS8_sf"/>
</dbReference>
<dbReference type="NCBIfam" id="NF001109">
    <property type="entry name" value="PRK00136.1"/>
    <property type="match status" value="1"/>
</dbReference>
<dbReference type="PANTHER" id="PTHR11758">
    <property type="entry name" value="40S RIBOSOMAL PROTEIN S15A"/>
    <property type="match status" value="1"/>
</dbReference>
<dbReference type="Pfam" id="PF00410">
    <property type="entry name" value="Ribosomal_S8"/>
    <property type="match status" value="1"/>
</dbReference>
<dbReference type="SUPFAM" id="SSF56047">
    <property type="entry name" value="Ribosomal protein S8"/>
    <property type="match status" value="1"/>
</dbReference>
<dbReference type="PROSITE" id="PS00053">
    <property type="entry name" value="RIBOSOMAL_S8"/>
    <property type="match status" value="1"/>
</dbReference>
<organism>
    <name type="scientific">Latilactobacillus sakei subsp. sakei (strain 23K)</name>
    <name type="common">Lactobacillus sakei subsp. sakei</name>
    <dbReference type="NCBI Taxonomy" id="314315"/>
    <lineage>
        <taxon>Bacteria</taxon>
        <taxon>Bacillati</taxon>
        <taxon>Bacillota</taxon>
        <taxon>Bacilli</taxon>
        <taxon>Lactobacillales</taxon>
        <taxon>Lactobacillaceae</taxon>
        <taxon>Latilactobacillus</taxon>
    </lineage>
</organism>
<feature type="initiator methionine" description="Removed" evidence="1">
    <location>
        <position position="1"/>
    </location>
</feature>
<feature type="chain" id="PRO_0000225872" description="Small ribosomal subunit protein uS8">
    <location>
        <begin position="2"/>
        <end position="132"/>
    </location>
</feature>
<sequence length="132" mass="14872">MVMTDPIADYLTRIRNANMVRHESLEVPASRIKKDISEILKREGFIRDYEVIEDDKQGIIRVFLKYGKNNERVISGLKRISKPGLRNYVKANEVPKVLNGLGIAIISTSNGVVTDKEAREKAAGGEVLAYVW</sequence>
<accession>Q38US5</accession>
<gene>
    <name evidence="2" type="primary">rpsH</name>
    <name type="ordered locus">LCA_1751</name>
</gene>